<dbReference type="EC" id="4.1.1.22"/>
<dbReference type="EMBL" id="J02613">
    <property type="protein sequence ID" value="AAB59151.1"/>
    <property type="molecule type" value="Genomic_DNA"/>
</dbReference>
<dbReference type="PIR" id="A25932">
    <property type="entry name" value="DCLBHP"/>
</dbReference>
<dbReference type="PDB" id="1HQ6">
    <property type="method" value="X-ray"/>
    <property type="resolution" value="2.70 A"/>
    <property type="chains" value="A/C=2-82, B/D=83-311"/>
</dbReference>
<dbReference type="PDB" id="1IBT">
    <property type="method" value="X-ray"/>
    <property type="resolution" value="2.60 A"/>
    <property type="chains" value="A/C/E=2-82, B/D/F=83-311"/>
</dbReference>
<dbReference type="PDB" id="1IBU">
    <property type="method" value="X-ray"/>
    <property type="resolution" value="3.10 A"/>
    <property type="chains" value="A/C/E=2-82, B/D/F=83-311"/>
</dbReference>
<dbReference type="PDB" id="1IBV">
    <property type="method" value="X-ray"/>
    <property type="resolution" value="2.50 A"/>
    <property type="chains" value="A/C/E=2-82, B/D/F=84-311"/>
</dbReference>
<dbReference type="PDB" id="1IBW">
    <property type="method" value="X-ray"/>
    <property type="resolution" value="3.20 A"/>
    <property type="chains" value="A/C/E=2-82, B/D/F=84-311"/>
</dbReference>
<dbReference type="PDB" id="1PYA">
    <property type="method" value="X-ray"/>
    <property type="resolution" value="2.50 A"/>
    <property type="chains" value="A/C/E=2-82, B/D/F=84-311"/>
</dbReference>
<dbReference type="PDBsum" id="1HQ6"/>
<dbReference type="PDBsum" id="1IBT"/>
<dbReference type="PDBsum" id="1IBU"/>
<dbReference type="PDBsum" id="1IBV"/>
<dbReference type="PDBsum" id="1IBW"/>
<dbReference type="PDBsum" id="1PYA"/>
<dbReference type="SMR" id="P00862"/>
<dbReference type="MEROPS" id="X39.001"/>
<dbReference type="BioCyc" id="MetaCyc:MONOMER-14628"/>
<dbReference type="BRENDA" id="4.1.1.22">
    <property type="organism ID" value="2897"/>
</dbReference>
<dbReference type="SABIO-RK" id="P00862"/>
<dbReference type="EvolutionaryTrace" id="P00862"/>
<dbReference type="GO" id="GO:0004398">
    <property type="term" value="F:histidine decarboxylase activity"/>
    <property type="evidence" value="ECO:0007669"/>
    <property type="project" value="UniProtKB-EC"/>
</dbReference>
<dbReference type="GO" id="GO:0006547">
    <property type="term" value="P:L-histidine metabolic process"/>
    <property type="evidence" value="ECO:0007669"/>
    <property type="project" value="InterPro"/>
</dbReference>
<dbReference type="Gene3D" id="4.10.510.10">
    <property type="entry name" value="Pyruvoyl-Dependent Histidine Decarboxylas, subunit A"/>
    <property type="match status" value="1"/>
</dbReference>
<dbReference type="Gene3D" id="3.50.20.10">
    <property type="entry name" value="Pyruvoyl-Dependent Histidine Decarboxylase, subunit B"/>
    <property type="match status" value="1"/>
</dbReference>
<dbReference type="InterPro" id="IPR003427">
    <property type="entry name" value="His_de-COase_proenz"/>
</dbReference>
<dbReference type="InterPro" id="IPR016106">
    <property type="entry name" value="Pyr-dep_his-deCO2ase_N"/>
</dbReference>
<dbReference type="InterPro" id="IPR016104">
    <property type="entry name" value="Pyr-dep_his/arg-deCO2ase"/>
</dbReference>
<dbReference type="InterPro" id="IPR016105">
    <property type="entry name" value="Pyr-dep_his/arg-deCO2ase_sand"/>
</dbReference>
<dbReference type="NCBIfam" id="TIGR00541">
    <property type="entry name" value="hisDCase_pyru"/>
    <property type="match status" value="1"/>
</dbReference>
<dbReference type="Pfam" id="PF02329">
    <property type="entry name" value="HDC"/>
    <property type="match status" value="1"/>
</dbReference>
<dbReference type="PIRSF" id="PIRSF001341">
    <property type="entry name" value="His_decarboxylas"/>
    <property type="match status" value="1"/>
</dbReference>
<dbReference type="SFLD" id="SFLDS00055">
    <property type="entry name" value="Pyruvoyl-Dependent_Histidine/A"/>
    <property type="match status" value="1"/>
</dbReference>
<dbReference type="SFLD" id="SFLDF00466">
    <property type="entry name" value="Pyruvoyl-dependent_histidine_d"/>
    <property type="match status" value="1"/>
</dbReference>
<dbReference type="SFLD" id="SFLDG01171">
    <property type="entry name" value="Pyruvoyl-dependent_histidine_d"/>
    <property type="match status" value="1"/>
</dbReference>
<dbReference type="SUPFAM" id="SSF56271">
    <property type="entry name" value="Pyruvoyl-dependent histidine and arginine decarboxylases"/>
    <property type="match status" value="1"/>
</dbReference>
<organism>
    <name type="scientific">Lactobacillus sp. (strain 30a)</name>
    <dbReference type="NCBI Taxonomy" id="1593"/>
    <lineage>
        <taxon>Bacteria</taxon>
        <taxon>Bacillati</taxon>
        <taxon>Bacillota</taxon>
        <taxon>Bacilli</taxon>
        <taxon>Lactobacillales</taxon>
        <taxon>Lactobacillaceae</taxon>
        <taxon>Lactobacillus</taxon>
    </lineage>
</organism>
<reference key="1">
    <citation type="journal article" date="1986" name="J. Biol. Chem.">
        <title>Cloning and nucleotide sequence of wild type and a mutant histidine decarboxylase from Lactobacillus 30a.</title>
        <authorList>
            <person name="Vanderslice P."/>
            <person name="Copeland W.C."/>
            <person name="Robertus J.D."/>
        </authorList>
    </citation>
    <scope>NUCLEOTIDE SEQUENCE [GENOMIC DNA]</scope>
</reference>
<reference key="2">
    <citation type="journal article" date="1982" name="J. Biol. Chem.">
        <title>Histidine decarboxylase of Lactobacillus 30a. Comparative sequences of the beta chain from wild type and mutant enzymes.</title>
        <authorList>
            <person name="Vaaler G.L."/>
            <person name="Recsei P.A."/>
            <person name="Fox J.L."/>
            <person name="Snell E.E."/>
        </authorList>
    </citation>
    <scope>PROTEIN SEQUENCE OF 2-82</scope>
</reference>
<reference key="3">
    <citation type="journal article" date="1984" name="J. Biol. Chem.">
        <title>Histidine decarboxylase of Lactobacillus 30a. Sequences of the overlapping peptides, the complete alpha chain, and prohistidine decarboxylase.</title>
        <authorList>
            <person name="Huynh Q.K."/>
            <person name="Recsei P.A."/>
            <person name="Vaaler G.L."/>
            <person name="Snell E.E."/>
        </authorList>
    </citation>
    <scope>PROTEIN SEQUENCE OF 83-308</scope>
    <scope>PYRUVATE FORMATION AT SER-83</scope>
</reference>
<reference key="4">
    <citation type="journal article" date="1985" name="J. Mol. Biol.">
        <title>Structure determination of histidine decarboxylase from Lactobacillus 30a at 3.0-A resolution.</title>
        <authorList>
            <person name="Parks E.H."/>
            <person name="Ernst S.R."/>
            <person name="Hamlin R."/>
            <person name="Xuong N.G."/>
            <person name="Hackert M.L."/>
        </authorList>
    </citation>
    <scope>X-RAY CRYSTALLOGRAPHY (3.0 ANGSTROMS)</scope>
</reference>
<reference key="5">
    <citation type="journal article" date="1989" name="J. Biol. Chem.">
        <title>Pyruvoyl-dependent histidine decarboxylase. Active site structure and mechanistic analysis.</title>
        <authorList>
            <person name="Gallagher T."/>
            <person name="Snell E.E."/>
            <person name="Hackert M.L."/>
        </authorList>
    </citation>
    <scope>X-RAY CRYSTALLOGRAPHY (2.5 ANGSTROMS) IN COMPLEX WITH SUBSTRATE ANALOG</scope>
    <scope>SUBSTRATE BINDING AT ASP-64 AND SER-82</scope>
</reference>
<reference key="6">
    <citation type="journal article" date="1993" name="J. Mol. Biol.">
        <title>Refined structure of the pyruvoyl-dependent histidine decarboxylase from Lactobacillus 30a.</title>
        <authorList>
            <person name="Gallagher T."/>
            <person name="Rozwarski D.A."/>
            <person name="Ernst S.R."/>
            <person name="Hackert M.L."/>
        </authorList>
    </citation>
    <scope>X-RAY CRYSTALLOGRAPHY (2.5 ANGSTROMS)</scope>
</reference>
<reference key="7">
    <citation type="journal article" date="2001" name="J. Mol. Biol.">
        <title>pH-induced structural changes regulate histidine decarboxylase activity in Lactobacillus 30a.</title>
        <authorList>
            <person name="Schelp E."/>
            <person name="Worley S."/>
            <person name="Monzingo A.F."/>
            <person name="Ernst S."/>
            <person name="Robertus J.D."/>
        </authorList>
    </citation>
    <scope>X-RAY CRYSTALLOGRAPHY (2.7 ANGSTROMS)</scope>
</reference>
<keyword id="KW-0002">3D-structure</keyword>
<keyword id="KW-0210">Decarboxylase</keyword>
<keyword id="KW-0903">Direct protein sequencing</keyword>
<keyword id="KW-0456">Lyase</keyword>
<keyword id="KW-0670">Pyruvate</keyword>
<keyword id="KW-0865">Zymogen</keyword>
<name>DCHS_LACS3</name>
<sequence>MSELDAKLNKLGVDRIAISPYKQWTRGYMEPGNIGNGYVTGLKVDAGVRDKSDDDVLDGIVSYDRAETKNAYIGQINMTTASSFTGVQGRVIGYDILRSPEVDKAKPLFTETQWDGSELPIYDAKPLQDALVEYFGTEQDRRHYPAPGSFIVCANKGVTAERPKNDADMKPGQGYGVWSAIAISFAKDPTKDSSMFVEDAGVWETPNEDELLEYLEGRRKAMAKSIAECGQDAHASFESSWIGFAYTMMEPGQIGNAITVAPYVSLPIDSIPGGSILTPDKDMEIMENLTMPEWLEKMGYKSLSANNALKY</sequence>
<protein>
    <recommendedName>
        <fullName>Histidine decarboxylase proenzyme</fullName>
        <ecNumber>4.1.1.22</ecNumber>
    </recommendedName>
    <alternativeName>
        <fullName>Pi chain</fullName>
    </alternativeName>
    <component>
        <recommendedName>
            <fullName>Histidine decarboxylase beta chain</fullName>
        </recommendedName>
    </component>
    <component>
        <recommendedName>
            <fullName>Histidine decarboxylase alpha chain</fullName>
        </recommendedName>
    </component>
</protein>
<accession>P00862</accession>
<proteinExistence type="evidence at protein level"/>
<evidence type="ECO:0000269" key="1">
    <source>
    </source>
</evidence>
<evidence type="ECO:0000269" key="2">
    <source>
    </source>
</evidence>
<evidence type="ECO:0000269" key="3">
    <source>
    </source>
</evidence>
<evidence type="ECO:0000305" key="4"/>
<evidence type="ECO:0007829" key="5">
    <source>
        <dbReference type="PDB" id="1IBT"/>
    </source>
</evidence>
<evidence type="ECO:0007829" key="6">
    <source>
        <dbReference type="PDB" id="1PYA"/>
    </source>
</evidence>
<comment type="catalytic activity">
    <reaction>
        <text>L-histidine + H(+) = histamine + CO2</text>
        <dbReference type="Rhea" id="RHEA:20840"/>
        <dbReference type="ChEBI" id="CHEBI:15378"/>
        <dbReference type="ChEBI" id="CHEBI:16526"/>
        <dbReference type="ChEBI" id="CHEBI:57595"/>
        <dbReference type="ChEBI" id="CHEBI:58432"/>
        <dbReference type="EC" id="4.1.1.22"/>
    </reaction>
</comment>
<comment type="cofactor">
    <cofactor>
        <name>pyruvate</name>
        <dbReference type="ChEBI" id="CHEBI:15361"/>
    </cofactor>
    <text>Binds 1 pyruvoyl group covalently per subunit.</text>
</comment>
<comment type="subunit">
    <text evidence="1">The proenzyme is a hexamer of identical pi chains; each pi chain monomer is cleaved to form a small (or beta) chain and a large (or alpha) chain by non-hydrolytic self-catalysis.</text>
</comment>
<feature type="initiator methionine" description="Removed" evidence="3">
    <location>
        <position position="1"/>
    </location>
</feature>
<feature type="chain" id="PRO_0000029953" description="Histidine decarboxylase beta chain">
    <location>
        <begin position="2"/>
        <end position="82"/>
    </location>
</feature>
<feature type="chain" id="PRO_0000029954" description="Histidine decarboxylase alpha chain">
    <location>
        <begin position="83"/>
        <end position="311"/>
    </location>
</feature>
<feature type="active site" description="Proton donor">
    <location>
        <position position="198"/>
    </location>
</feature>
<feature type="binding site">
    <location>
        <position position="64"/>
    </location>
    <ligand>
        <name>substrate</name>
    </ligand>
</feature>
<feature type="binding site">
    <location>
        <position position="82"/>
    </location>
    <ligand>
        <name>substrate</name>
    </ligand>
</feature>
<feature type="site" description="Cleavage (non-hydrolytic)">
    <location>
        <begin position="82"/>
        <end position="83"/>
    </location>
</feature>
<feature type="modified residue" description="Pyruvic acid (Ser)" evidence="2">
    <location>
        <position position="83"/>
    </location>
</feature>
<feature type="sequence conflict" description="In Ref. 3; AA sequence." evidence="4" ref="3">
    <original>N</original>
    <variation>D</variation>
    <location>
        <position position="207"/>
    </location>
</feature>
<feature type="sequence conflict" description="In Ref. 3; AA sequence." evidence="4" ref="3">
    <original>L</original>
    <variation>I</variation>
    <location>
        <position position="266"/>
    </location>
</feature>
<feature type="sequence conflict" description="In Ref. 3; AA sequence." evidence="4" ref="3">
    <original>I</original>
    <variation>L</variation>
    <location>
        <position position="271"/>
    </location>
</feature>
<feature type="sequence conflict" description="In Ref. 3; AA sequence." evidence="4" ref="3">
    <location>
        <begin position="285"/>
        <end position="287"/>
    </location>
</feature>
<feature type="helix" evidence="6">
    <location>
        <begin position="3"/>
        <end position="10"/>
    </location>
</feature>
<feature type="strand" evidence="6">
    <location>
        <begin position="18"/>
        <end position="23"/>
    </location>
</feature>
<feature type="strand" evidence="6">
    <location>
        <begin position="25"/>
        <end position="27"/>
    </location>
</feature>
<feature type="strand" evidence="6">
    <location>
        <begin position="34"/>
        <end position="36"/>
    </location>
</feature>
<feature type="strand" evidence="6">
    <location>
        <begin position="38"/>
        <end position="40"/>
    </location>
</feature>
<feature type="strand" evidence="6">
    <location>
        <begin position="43"/>
        <end position="50"/>
    </location>
</feature>
<feature type="helix" evidence="6">
    <location>
        <begin position="55"/>
        <end position="68"/>
    </location>
</feature>
<feature type="strand" evidence="6">
    <location>
        <begin position="69"/>
        <end position="71"/>
    </location>
</feature>
<feature type="strand" evidence="6">
    <location>
        <begin position="77"/>
        <end position="82"/>
    </location>
</feature>
<feature type="strand" evidence="6">
    <location>
        <begin position="89"/>
        <end position="91"/>
    </location>
</feature>
<feature type="turn" evidence="6">
    <location>
        <begin position="92"/>
        <end position="94"/>
    </location>
</feature>
<feature type="strand" evidence="6">
    <location>
        <begin position="95"/>
        <end position="98"/>
    </location>
</feature>
<feature type="helix" evidence="6">
    <location>
        <begin position="100"/>
        <end position="103"/>
    </location>
</feature>
<feature type="strand" evidence="6">
    <location>
        <begin position="108"/>
        <end position="112"/>
    </location>
</feature>
<feature type="strand" evidence="6">
    <location>
        <begin position="118"/>
        <end position="123"/>
    </location>
</feature>
<feature type="helix" evidence="6">
    <location>
        <begin position="125"/>
        <end position="135"/>
    </location>
</feature>
<feature type="strand" evidence="6">
    <location>
        <begin position="138"/>
        <end position="141"/>
    </location>
</feature>
<feature type="strand" evidence="6">
    <location>
        <begin position="150"/>
        <end position="162"/>
    </location>
</feature>
<feature type="strand" evidence="5">
    <location>
        <begin position="171"/>
        <end position="173"/>
    </location>
</feature>
<feature type="strand" evidence="6">
    <location>
        <begin position="175"/>
        <end position="188"/>
    </location>
</feature>
<feature type="turn" evidence="6">
    <location>
        <begin position="189"/>
        <end position="191"/>
    </location>
</feature>
<feature type="strand" evidence="6">
    <location>
        <begin position="194"/>
        <end position="203"/>
    </location>
</feature>
<feature type="helix" evidence="6">
    <location>
        <begin position="208"/>
        <end position="232"/>
    </location>
</feature>
<feature type="strand" evidence="6">
    <location>
        <begin position="237"/>
        <end position="248"/>
    </location>
</feature>
<feature type="strand" evidence="6">
    <location>
        <begin position="253"/>
        <end position="267"/>
    </location>
</feature>
<feature type="helix" evidence="6">
    <location>
        <begin position="268"/>
        <end position="270"/>
    </location>
</feature>
<feature type="helix" evidence="6">
    <location>
        <begin position="279"/>
        <end position="288"/>
    </location>
</feature>
<feature type="helix" evidence="6">
    <location>
        <begin position="291"/>
        <end position="298"/>
    </location>
</feature>
<feature type="turn" evidence="6">
    <location>
        <begin position="305"/>
        <end position="307"/>
    </location>
</feature>
<gene>
    <name type="primary">hdcA</name>
</gene>